<proteinExistence type="inferred from homology"/>
<organism>
    <name type="scientific">Chelativorans sp. (strain BNC1)</name>
    <dbReference type="NCBI Taxonomy" id="266779"/>
    <lineage>
        <taxon>Bacteria</taxon>
        <taxon>Pseudomonadati</taxon>
        <taxon>Pseudomonadota</taxon>
        <taxon>Alphaproteobacteria</taxon>
        <taxon>Hyphomicrobiales</taxon>
        <taxon>Phyllobacteriaceae</taxon>
        <taxon>Chelativorans</taxon>
    </lineage>
</organism>
<evidence type="ECO:0000255" key="1">
    <source>
        <dbReference type="HAMAP-Rule" id="MF_00014"/>
    </source>
</evidence>
<evidence type="ECO:0000256" key="2">
    <source>
        <dbReference type="SAM" id="MobiDB-lite"/>
    </source>
</evidence>
<gene>
    <name evidence="1" type="primary">rimM</name>
    <name type="ordered locus">Meso_3443</name>
</gene>
<dbReference type="EMBL" id="CP000390">
    <property type="protein sequence ID" value="ABG64814.1"/>
    <property type="molecule type" value="Genomic_DNA"/>
</dbReference>
<dbReference type="SMR" id="Q11CR1"/>
<dbReference type="STRING" id="266779.Meso_3443"/>
<dbReference type="KEGG" id="mes:Meso_3443"/>
<dbReference type="eggNOG" id="COG0806">
    <property type="taxonomic scope" value="Bacteria"/>
</dbReference>
<dbReference type="HOGENOM" id="CLU_077636_0_1_5"/>
<dbReference type="OrthoDB" id="9788191at2"/>
<dbReference type="GO" id="GO:0005737">
    <property type="term" value="C:cytoplasm"/>
    <property type="evidence" value="ECO:0007669"/>
    <property type="project" value="UniProtKB-SubCell"/>
</dbReference>
<dbReference type="GO" id="GO:0005840">
    <property type="term" value="C:ribosome"/>
    <property type="evidence" value="ECO:0007669"/>
    <property type="project" value="InterPro"/>
</dbReference>
<dbReference type="GO" id="GO:0043022">
    <property type="term" value="F:ribosome binding"/>
    <property type="evidence" value="ECO:0007669"/>
    <property type="project" value="InterPro"/>
</dbReference>
<dbReference type="GO" id="GO:0042274">
    <property type="term" value="P:ribosomal small subunit biogenesis"/>
    <property type="evidence" value="ECO:0007669"/>
    <property type="project" value="UniProtKB-UniRule"/>
</dbReference>
<dbReference type="GO" id="GO:0006364">
    <property type="term" value="P:rRNA processing"/>
    <property type="evidence" value="ECO:0007669"/>
    <property type="project" value="UniProtKB-UniRule"/>
</dbReference>
<dbReference type="Gene3D" id="2.30.30.240">
    <property type="entry name" value="PRC-barrel domain"/>
    <property type="match status" value="1"/>
</dbReference>
<dbReference type="Gene3D" id="2.40.30.60">
    <property type="entry name" value="RimM"/>
    <property type="match status" value="1"/>
</dbReference>
<dbReference type="HAMAP" id="MF_00014">
    <property type="entry name" value="Ribosome_mat_RimM"/>
    <property type="match status" value="1"/>
</dbReference>
<dbReference type="InterPro" id="IPR011033">
    <property type="entry name" value="PRC_barrel-like_sf"/>
</dbReference>
<dbReference type="InterPro" id="IPR056792">
    <property type="entry name" value="PRC_RimM"/>
</dbReference>
<dbReference type="InterPro" id="IPR011961">
    <property type="entry name" value="RimM"/>
</dbReference>
<dbReference type="InterPro" id="IPR002676">
    <property type="entry name" value="RimM_N"/>
</dbReference>
<dbReference type="InterPro" id="IPR036976">
    <property type="entry name" value="RimM_N_sf"/>
</dbReference>
<dbReference type="InterPro" id="IPR009000">
    <property type="entry name" value="Transl_B-barrel_sf"/>
</dbReference>
<dbReference type="NCBIfam" id="TIGR02273">
    <property type="entry name" value="16S_RimM"/>
    <property type="match status" value="1"/>
</dbReference>
<dbReference type="PANTHER" id="PTHR33692">
    <property type="entry name" value="RIBOSOME MATURATION FACTOR RIMM"/>
    <property type="match status" value="1"/>
</dbReference>
<dbReference type="PANTHER" id="PTHR33692:SF1">
    <property type="entry name" value="RIBOSOME MATURATION FACTOR RIMM"/>
    <property type="match status" value="1"/>
</dbReference>
<dbReference type="Pfam" id="PF24986">
    <property type="entry name" value="PRC_RimM"/>
    <property type="match status" value="1"/>
</dbReference>
<dbReference type="Pfam" id="PF01782">
    <property type="entry name" value="RimM"/>
    <property type="match status" value="1"/>
</dbReference>
<dbReference type="SUPFAM" id="SSF50346">
    <property type="entry name" value="PRC-barrel domain"/>
    <property type="match status" value="1"/>
</dbReference>
<dbReference type="SUPFAM" id="SSF50447">
    <property type="entry name" value="Translation proteins"/>
    <property type="match status" value="1"/>
</dbReference>
<protein>
    <recommendedName>
        <fullName evidence="1">Ribosome maturation factor RimM</fullName>
    </recommendedName>
</protein>
<feature type="chain" id="PRO_0000351773" description="Ribosome maturation factor RimM">
    <location>
        <begin position="1"/>
        <end position="212"/>
    </location>
</feature>
<feature type="domain" description="PRC barrel" evidence="1">
    <location>
        <begin position="105"/>
        <end position="181"/>
    </location>
</feature>
<feature type="region of interest" description="Disordered" evidence="2">
    <location>
        <begin position="181"/>
        <end position="212"/>
    </location>
</feature>
<keyword id="KW-0143">Chaperone</keyword>
<keyword id="KW-0963">Cytoplasm</keyword>
<keyword id="KW-0690">Ribosome biogenesis</keyword>
<keyword id="KW-0698">rRNA processing</keyword>
<comment type="function">
    <text evidence="1">An accessory protein needed during the final step in the assembly of 30S ribosomal subunit, possibly for assembly of the head region. Essential for efficient processing of 16S rRNA. May be needed both before and after RbfA during the maturation of 16S rRNA. It has affinity for free ribosomal 30S subunits but not for 70S ribosomes.</text>
</comment>
<comment type="subunit">
    <text evidence="1">Binds ribosomal protein uS19.</text>
</comment>
<comment type="subcellular location">
    <subcellularLocation>
        <location evidence="1">Cytoplasm</location>
    </subcellularLocation>
</comment>
<comment type="domain">
    <text evidence="1">The PRC barrel domain binds ribosomal protein uS19.</text>
</comment>
<comment type="similarity">
    <text evidence="1">Belongs to the RimM family.</text>
</comment>
<name>RIMM_CHESB</name>
<accession>Q11CR1</accession>
<reference key="1">
    <citation type="submission" date="2006-06" db="EMBL/GenBank/DDBJ databases">
        <title>Complete sequence of chromosome of Mesorhizobium sp. BNC1.</title>
        <authorList>
            <consortium name="US DOE Joint Genome Institute"/>
            <person name="Copeland A."/>
            <person name="Lucas S."/>
            <person name="Lapidus A."/>
            <person name="Barry K."/>
            <person name="Detter J.C."/>
            <person name="Glavina del Rio T."/>
            <person name="Hammon N."/>
            <person name="Israni S."/>
            <person name="Dalin E."/>
            <person name="Tice H."/>
            <person name="Pitluck S."/>
            <person name="Chertkov O."/>
            <person name="Brettin T."/>
            <person name="Bruce D."/>
            <person name="Han C."/>
            <person name="Tapia R."/>
            <person name="Gilna P."/>
            <person name="Schmutz J."/>
            <person name="Larimer F."/>
            <person name="Land M."/>
            <person name="Hauser L."/>
            <person name="Kyrpides N."/>
            <person name="Mikhailova N."/>
            <person name="Richardson P."/>
        </authorList>
    </citation>
    <scope>NUCLEOTIDE SEQUENCE [LARGE SCALE GENOMIC DNA]</scope>
    <source>
        <strain>BNC1</strain>
    </source>
</reference>
<sequence>METHMAKPKAPAGIENPVQLAVIGAAHGIKGEVRVKTFTEDPMALGSYGPLHMVDGRVLQVAAIRPAKEVVIVRFKGVDGRNAAEALNGEALFVDRSALPEKLEEEEFYYADLIGMAVLDEKGENLGRVVAVHNFGAGDLLEFRENSGPTVIIPFTRDAVPDIDLSNNTIRIDSITAGLDNAELSGEEDEAEGPESARGSRPRGPKSAGEPR</sequence>